<name>RL35_SALDC</name>
<gene>
    <name evidence="1" type="primary">rpmI</name>
    <name type="ordered locus">SeD_A2010</name>
</gene>
<organism>
    <name type="scientific">Salmonella dublin (strain CT_02021853)</name>
    <dbReference type="NCBI Taxonomy" id="439851"/>
    <lineage>
        <taxon>Bacteria</taxon>
        <taxon>Pseudomonadati</taxon>
        <taxon>Pseudomonadota</taxon>
        <taxon>Gammaproteobacteria</taxon>
        <taxon>Enterobacterales</taxon>
        <taxon>Enterobacteriaceae</taxon>
        <taxon>Salmonella</taxon>
    </lineage>
</organism>
<proteinExistence type="inferred from homology"/>
<evidence type="ECO:0000255" key="1">
    <source>
        <dbReference type="HAMAP-Rule" id="MF_00514"/>
    </source>
</evidence>
<evidence type="ECO:0000256" key="2">
    <source>
        <dbReference type="SAM" id="MobiDB-lite"/>
    </source>
</evidence>
<evidence type="ECO:0000305" key="3"/>
<feature type="chain" id="PRO_1000127402" description="Large ribosomal subunit protein bL35">
    <location>
        <begin position="1"/>
        <end position="65"/>
    </location>
</feature>
<feature type="region of interest" description="Disordered" evidence="2">
    <location>
        <begin position="1"/>
        <end position="22"/>
    </location>
</feature>
<feature type="compositionally biased region" description="Basic residues" evidence="2">
    <location>
        <begin position="10"/>
        <end position="22"/>
    </location>
</feature>
<sequence>MPKIKTVRGAAKRFKKTGKGGFKHKHANLRHILTKKATKRKRHLRPKAMVSKGDLGLVIACLPYA</sequence>
<keyword id="KW-0687">Ribonucleoprotein</keyword>
<keyword id="KW-0689">Ribosomal protein</keyword>
<comment type="similarity">
    <text evidence="1">Belongs to the bacterial ribosomal protein bL35 family.</text>
</comment>
<protein>
    <recommendedName>
        <fullName evidence="1">Large ribosomal subunit protein bL35</fullName>
    </recommendedName>
    <alternativeName>
        <fullName evidence="3">50S ribosomal protein L35</fullName>
    </alternativeName>
</protein>
<accession>B5FJA6</accession>
<reference key="1">
    <citation type="journal article" date="2011" name="J. Bacteriol.">
        <title>Comparative genomics of 28 Salmonella enterica isolates: evidence for CRISPR-mediated adaptive sublineage evolution.</title>
        <authorList>
            <person name="Fricke W.F."/>
            <person name="Mammel M.K."/>
            <person name="McDermott P.F."/>
            <person name="Tartera C."/>
            <person name="White D.G."/>
            <person name="Leclerc J.E."/>
            <person name="Ravel J."/>
            <person name="Cebula T.A."/>
        </authorList>
    </citation>
    <scope>NUCLEOTIDE SEQUENCE [LARGE SCALE GENOMIC DNA]</scope>
    <source>
        <strain>CT_02021853</strain>
    </source>
</reference>
<dbReference type="EMBL" id="CP001144">
    <property type="protein sequence ID" value="ACH77359.1"/>
    <property type="molecule type" value="Genomic_DNA"/>
</dbReference>
<dbReference type="RefSeq" id="WP_001124225.1">
    <property type="nucleotide sequence ID" value="NC_011205.1"/>
</dbReference>
<dbReference type="SMR" id="B5FJA6"/>
<dbReference type="GeneID" id="97601348"/>
<dbReference type="KEGG" id="sed:SeD_A2010"/>
<dbReference type="HOGENOM" id="CLU_169643_1_1_6"/>
<dbReference type="Proteomes" id="UP000008322">
    <property type="component" value="Chromosome"/>
</dbReference>
<dbReference type="GO" id="GO:0022625">
    <property type="term" value="C:cytosolic large ribosomal subunit"/>
    <property type="evidence" value="ECO:0007669"/>
    <property type="project" value="TreeGrafter"/>
</dbReference>
<dbReference type="GO" id="GO:0003735">
    <property type="term" value="F:structural constituent of ribosome"/>
    <property type="evidence" value="ECO:0007669"/>
    <property type="project" value="InterPro"/>
</dbReference>
<dbReference type="GO" id="GO:0006412">
    <property type="term" value="P:translation"/>
    <property type="evidence" value="ECO:0007669"/>
    <property type="project" value="UniProtKB-UniRule"/>
</dbReference>
<dbReference type="FunFam" id="4.10.410.60:FF:000001">
    <property type="entry name" value="50S ribosomal protein L35"/>
    <property type="match status" value="1"/>
</dbReference>
<dbReference type="Gene3D" id="4.10.410.60">
    <property type="match status" value="1"/>
</dbReference>
<dbReference type="HAMAP" id="MF_00514">
    <property type="entry name" value="Ribosomal_bL35"/>
    <property type="match status" value="1"/>
</dbReference>
<dbReference type="InterPro" id="IPR001706">
    <property type="entry name" value="Ribosomal_bL35"/>
</dbReference>
<dbReference type="InterPro" id="IPR021137">
    <property type="entry name" value="Ribosomal_bL35-like"/>
</dbReference>
<dbReference type="InterPro" id="IPR018265">
    <property type="entry name" value="Ribosomal_bL35_CS"/>
</dbReference>
<dbReference type="InterPro" id="IPR037229">
    <property type="entry name" value="Ribosomal_bL35_sf"/>
</dbReference>
<dbReference type="NCBIfam" id="TIGR00001">
    <property type="entry name" value="rpmI_bact"/>
    <property type="match status" value="1"/>
</dbReference>
<dbReference type="PANTHER" id="PTHR33343">
    <property type="entry name" value="54S RIBOSOMAL PROTEIN BL35M"/>
    <property type="match status" value="1"/>
</dbReference>
<dbReference type="PANTHER" id="PTHR33343:SF1">
    <property type="entry name" value="LARGE RIBOSOMAL SUBUNIT PROTEIN BL35M"/>
    <property type="match status" value="1"/>
</dbReference>
<dbReference type="Pfam" id="PF01632">
    <property type="entry name" value="Ribosomal_L35p"/>
    <property type="match status" value="1"/>
</dbReference>
<dbReference type="PRINTS" id="PR00064">
    <property type="entry name" value="RIBOSOMALL35"/>
</dbReference>
<dbReference type="SUPFAM" id="SSF143034">
    <property type="entry name" value="L35p-like"/>
    <property type="match status" value="1"/>
</dbReference>
<dbReference type="PROSITE" id="PS00936">
    <property type="entry name" value="RIBOSOMAL_L35"/>
    <property type="match status" value="1"/>
</dbReference>